<gene>
    <name evidence="1" type="primary">gpmA</name>
    <name type="ordered locus">YPK_2948</name>
</gene>
<reference key="1">
    <citation type="submission" date="2008-02" db="EMBL/GenBank/DDBJ databases">
        <title>Complete sequence of Yersinia pseudotuberculosis YPIII.</title>
        <authorList>
            <consortium name="US DOE Joint Genome Institute"/>
            <person name="Copeland A."/>
            <person name="Lucas S."/>
            <person name="Lapidus A."/>
            <person name="Glavina del Rio T."/>
            <person name="Dalin E."/>
            <person name="Tice H."/>
            <person name="Bruce D."/>
            <person name="Goodwin L."/>
            <person name="Pitluck S."/>
            <person name="Munk A.C."/>
            <person name="Brettin T."/>
            <person name="Detter J.C."/>
            <person name="Han C."/>
            <person name="Tapia R."/>
            <person name="Schmutz J."/>
            <person name="Larimer F."/>
            <person name="Land M."/>
            <person name="Hauser L."/>
            <person name="Challacombe J.F."/>
            <person name="Green L."/>
            <person name="Lindler L.E."/>
            <person name="Nikolich M.P."/>
            <person name="Richardson P."/>
        </authorList>
    </citation>
    <scope>NUCLEOTIDE SEQUENCE [LARGE SCALE GENOMIC DNA]</scope>
    <source>
        <strain>YPIII</strain>
    </source>
</reference>
<keyword id="KW-0312">Gluconeogenesis</keyword>
<keyword id="KW-0324">Glycolysis</keyword>
<keyword id="KW-0413">Isomerase</keyword>
<comment type="function">
    <text evidence="1">Catalyzes the interconversion of 2-phosphoglycerate and 3-phosphoglycerate.</text>
</comment>
<comment type="catalytic activity">
    <reaction evidence="1">
        <text>(2R)-2-phosphoglycerate = (2R)-3-phosphoglycerate</text>
        <dbReference type="Rhea" id="RHEA:15901"/>
        <dbReference type="ChEBI" id="CHEBI:58272"/>
        <dbReference type="ChEBI" id="CHEBI:58289"/>
        <dbReference type="EC" id="5.4.2.11"/>
    </reaction>
</comment>
<comment type="pathway">
    <text evidence="1">Carbohydrate degradation; glycolysis; pyruvate from D-glyceraldehyde 3-phosphate: step 3/5.</text>
</comment>
<comment type="subunit">
    <text evidence="1">Homodimer.</text>
</comment>
<comment type="similarity">
    <text evidence="1">Belongs to the phosphoglycerate mutase family. BPG-dependent PGAM subfamily.</text>
</comment>
<evidence type="ECO:0000255" key="1">
    <source>
        <dbReference type="HAMAP-Rule" id="MF_01039"/>
    </source>
</evidence>
<feature type="chain" id="PRO_1000135998" description="2,3-bisphosphoglycerate-dependent phosphoglycerate mutase">
    <location>
        <begin position="1"/>
        <end position="250"/>
    </location>
</feature>
<feature type="active site" description="Tele-phosphohistidine intermediate" evidence="1">
    <location>
        <position position="11"/>
    </location>
</feature>
<feature type="active site" description="Proton donor/acceptor" evidence="1">
    <location>
        <position position="89"/>
    </location>
</feature>
<feature type="binding site" evidence="1">
    <location>
        <begin position="10"/>
        <end position="17"/>
    </location>
    <ligand>
        <name>substrate</name>
    </ligand>
</feature>
<feature type="binding site" evidence="1">
    <location>
        <begin position="23"/>
        <end position="24"/>
    </location>
    <ligand>
        <name>substrate</name>
    </ligand>
</feature>
<feature type="binding site" evidence="1">
    <location>
        <position position="62"/>
    </location>
    <ligand>
        <name>substrate</name>
    </ligand>
</feature>
<feature type="binding site" evidence="1">
    <location>
        <begin position="89"/>
        <end position="92"/>
    </location>
    <ligand>
        <name>substrate</name>
    </ligand>
</feature>
<feature type="binding site" evidence="1">
    <location>
        <position position="100"/>
    </location>
    <ligand>
        <name>substrate</name>
    </ligand>
</feature>
<feature type="binding site" evidence="1">
    <location>
        <begin position="116"/>
        <end position="117"/>
    </location>
    <ligand>
        <name>substrate</name>
    </ligand>
</feature>
<feature type="binding site" evidence="1">
    <location>
        <begin position="185"/>
        <end position="186"/>
    </location>
    <ligand>
        <name>substrate</name>
    </ligand>
</feature>
<feature type="site" description="Transition state stabilizer" evidence="1">
    <location>
        <position position="184"/>
    </location>
</feature>
<accession>B1JSU1</accession>
<sequence>MAVTKLVLVRHGESQWNNENRFTGWYDVDLSEKGRSEAKAAGKLLKDEGFTFDFAYTSVLKRAIHTLWNILDELDQAWLPTEKTWKLNERHYGALQGLNKSETAEKYGDEQVKQWRRGFAITPPALEKSDERFPGHDPRYAKLTDAELPTTESLALTIERVIPYWNDVIKPRIASGERVIIAAHGNSLRALVKYLDDLGEDEILELNIPTGVPLVYEFDENFKPIKHYYLGNADEIAAKAAAVANQGKAK</sequence>
<organism>
    <name type="scientific">Yersinia pseudotuberculosis serotype O:3 (strain YPIII)</name>
    <dbReference type="NCBI Taxonomy" id="502800"/>
    <lineage>
        <taxon>Bacteria</taxon>
        <taxon>Pseudomonadati</taxon>
        <taxon>Pseudomonadota</taxon>
        <taxon>Gammaproteobacteria</taxon>
        <taxon>Enterobacterales</taxon>
        <taxon>Yersiniaceae</taxon>
        <taxon>Yersinia</taxon>
    </lineage>
</organism>
<dbReference type="EC" id="5.4.2.11" evidence="1"/>
<dbReference type="EMBL" id="CP000950">
    <property type="protein sequence ID" value="ACA69222.1"/>
    <property type="molecule type" value="Genomic_DNA"/>
</dbReference>
<dbReference type="RefSeq" id="WP_002210746.1">
    <property type="nucleotide sequence ID" value="NZ_CP009792.1"/>
</dbReference>
<dbReference type="SMR" id="B1JSU1"/>
<dbReference type="GeneID" id="57977273"/>
<dbReference type="KEGG" id="ypy:YPK_2948"/>
<dbReference type="PATRIC" id="fig|502800.11.peg.3669"/>
<dbReference type="UniPathway" id="UPA00109">
    <property type="reaction ID" value="UER00186"/>
</dbReference>
<dbReference type="GO" id="GO:0004619">
    <property type="term" value="F:phosphoglycerate mutase activity"/>
    <property type="evidence" value="ECO:0007669"/>
    <property type="project" value="UniProtKB-EC"/>
</dbReference>
<dbReference type="GO" id="GO:0006094">
    <property type="term" value="P:gluconeogenesis"/>
    <property type="evidence" value="ECO:0007669"/>
    <property type="project" value="UniProtKB-UniRule"/>
</dbReference>
<dbReference type="GO" id="GO:0006096">
    <property type="term" value="P:glycolytic process"/>
    <property type="evidence" value="ECO:0007669"/>
    <property type="project" value="UniProtKB-UniRule"/>
</dbReference>
<dbReference type="CDD" id="cd07067">
    <property type="entry name" value="HP_PGM_like"/>
    <property type="match status" value="1"/>
</dbReference>
<dbReference type="FunFam" id="3.40.50.1240:FF:000003">
    <property type="entry name" value="2,3-bisphosphoglycerate-dependent phosphoglycerate mutase"/>
    <property type="match status" value="1"/>
</dbReference>
<dbReference type="Gene3D" id="3.40.50.1240">
    <property type="entry name" value="Phosphoglycerate mutase-like"/>
    <property type="match status" value="1"/>
</dbReference>
<dbReference type="HAMAP" id="MF_01039">
    <property type="entry name" value="PGAM_GpmA"/>
    <property type="match status" value="1"/>
</dbReference>
<dbReference type="InterPro" id="IPR013078">
    <property type="entry name" value="His_Pase_superF_clade-1"/>
</dbReference>
<dbReference type="InterPro" id="IPR029033">
    <property type="entry name" value="His_PPase_superfam"/>
</dbReference>
<dbReference type="InterPro" id="IPR001345">
    <property type="entry name" value="PG/BPGM_mutase_AS"/>
</dbReference>
<dbReference type="InterPro" id="IPR005952">
    <property type="entry name" value="Phosphogly_mut1"/>
</dbReference>
<dbReference type="NCBIfam" id="TIGR01258">
    <property type="entry name" value="pgm_1"/>
    <property type="match status" value="1"/>
</dbReference>
<dbReference type="NCBIfam" id="NF010713">
    <property type="entry name" value="PRK14115.1"/>
    <property type="match status" value="1"/>
</dbReference>
<dbReference type="PANTHER" id="PTHR11931">
    <property type="entry name" value="PHOSPHOGLYCERATE MUTASE"/>
    <property type="match status" value="1"/>
</dbReference>
<dbReference type="Pfam" id="PF00300">
    <property type="entry name" value="His_Phos_1"/>
    <property type="match status" value="1"/>
</dbReference>
<dbReference type="PIRSF" id="PIRSF000709">
    <property type="entry name" value="6PFK_2-Ptase"/>
    <property type="match status" value="1"/>
</dbReference>
<dbReference type="SMART" id="SM00855">
    <property type="entry name" value="PGAM"/>
    <property type="match status" value="1"/>
</dbReference>
<dbReference type="SUPFAM" id="SSF53254">
    <property type="entry name" value="Phosphoglycerate mutase-like"/>
    <property type="match status" value="1"/>
</dbReference>
<dbReference type="PROSITE" id="PS00175">
    <property type="entry name" value="PG_MUTASE"/>
    <property type="match status" value="1"/>
</dbReference>
<name>GPMA_YERPY</name>
<protein>
    <recommendedName>
        <fullName evidence="1">2,3-bisphosphoglycerate-dependent phosphoglycerate mutase</fullName>
        <shortName evidence="1">BPG-dependent PGAM</shortName>
        <shortName evidence="1">PGAM</shortName>
        <shortName evidence="1">Phosphoglyceromutase</shortName>
        <shortName evidence="1">dPGM</shortName>
        <ecNumber evidence="1">5.4.2.11</ecNumber>
    </recommendedName>
</protein>
<proteinExistence type="inferred from homology"/>